<evidence type="ECO:0000255" key="1"/>
<evidence type="ECO:0000269" key="2">
    <source>
    </source>
</evidence>
<evidence type="ECO:0000303" key="3">
    <source>
    </source>
</evidence>
<evidence type="ECO:0000305" key="4"/>
<feature type="signal peptide" evidence="1">
    <location>
        <begin position="1"/>
        <end position="15"/>
    </location>
</feature>
<feature type="chain" id="PRO_0000419256" description="Allergen Tha p 2" evidence="1">
    <location>
        <begin position="16"/>
        <end position="115"/>
    </location>
</feature>
<protein>
    <recommendedName>
        <fullName evidence="3">Allergen Tha p 2</fullName>
    </recommendedName>
    <allergenName evidence="3">Tha p 2</allergenName>
</protein>
<reference evidence="4" key="1">
    <citation type="journal article" date="2012" name="Contact Derm.">
        <title>Setae from the pine processionary moth (Thaumetopoea pityocampa) contain several relevant allergens.</title>
        <authorList>
            <person name="Rodriguez-Mahillo A.I."/>
            <person name="Gonzalez-Munoz M."/>
            <person name="Vega J.M."/>
            <person name="Lopez J.A."/>
            <person name="Yart A."/>
            <person name="Kerdelhue C."/>
            <person name="Camafeita E."/>
            <person name="Garcia Ortiz J.C."/>
            <person name="Vogel H."/>
            <person name="Petrucco Toffolo E."/>
            <person name="Zovi D."/>
            <person name="Battisti A."/>
            <person name="Roques A."/>
            <person name="Moneo I."/>
        </authorList>
    </citation>
    <scope>NUCLEOTIDE SEQUENCE [MRNA]</scope>
    <scope>PROTEIN SEQUENCE OF 22-61 AND 89-109</scope>
    <scope>ALLERGEN</scope>
    <source>
        <tissue evidence="2">Seta</tissue>
    </source>
</reference>
<organism>
    <name type="scientific">Thaumetopoea pityocampa</name>
    <name type="common">Pine processionary moth</name>
    <name type="synonym">Bombyx pityocampa</name>
    <dbReference type="NCBI Taxonomy" id="208016"/>
    <lineage>
        <taxon>Eukaryota</taxon>
        <taxon>Metazoa</taxon>
        <taxon>Ecdysozoa</taxon>
        <taxon>Arthropoda</taxon>
        <taxon>Hexapoda</taxon>
        <taxon>Insecta</taxon>
        <taxon>Pterygota</taxon>
        <taxon>Neoptera</taxon>
        <taxon>Endopterygota</taxon>
        <taxon>Lepidoptera</taxon>
        <taxon>Glossata</taxon>
        <taxon>Ditrysia</taxon>
        <taxon>Noctuoidea</taxon>
        <taxon>Notodontidae</taxon>
        <taxon>Thaumetopoeinae</taxon>
        <taxon>Thaumetopoea</taxon>
    </lineage>
</organism>
<proteinExistence type="evidence at protein level"/>
<comment type="developmental stage">
    <text evidence="2">Larvae.</text>
</comment>
<comment type="allergen">
    <text evidence="2">Causes an allergic reaction in human. Binds to IgE.</text>
</comment>
<keyword id="KW-0020">Allergen</keyword>
<keyword id="KW-0903">Direct protein sequencing</keyword>
<keyword id="KW-0732">Signal</keyword>
<sequence>MKLLIFAILIALSSSVPQLSEKAEEAVDLAYQEKNNLFDLGSVAGDILSRSGCHVSFGCHKGYCWAGCGDPTNPWSWGENWCYTTKSYSQSYSYVQCTQDSECDGCWKCGGPCSA</sequence>
<name>ALL2_THAPI</name>
<accession>P86360</accession>
<dbReference type="SMR" id="P86360"/>
<dbReference type="Allergome" id="8441">
    <property type="allergen name" value="Tha p 2"/>
</dbReference>
<dbReference type="Allergome" id="8442">
    <property type="allergen name" value="Tha p 2.0101"/>
</dbReference>